<keyword id="KW-0328">Glycosyltransferase</keyword>
<keyword id="KW-0460">Magnesium</keyword>
<keyword id="KW-0665">Pyrimidine biosynthesis</keyword>
<keyword id="KW-1185">Reference proteome</keyword>
<keyword id="KW-0808">Transferase</keyword>
<name>PYRE_THISH</name>
<accession>B8GTF1</accession>
<protein>
    <recommendedName>
        <fullName evidence="1">Orotate phosphoribosyltransferase</fullName>
        <shortName evidence="1">OPRT</shortName>
        <shortName evidence="1">OPRTase</shortName>
        <ecNumber evidence="1">2.4.2.10</ecNumber>
    </recommendedName>
</protein>
<feature type="chain" id="PRO_1000164693" description="Orotate phosphoribosyltransferase">
    <location>
        <begin position="1"/>
        <end position="213"/>
    </location>
</feature>
<feature type="binding site" description="in other chain" evidence="1">
    <location>
        <position position="26"/>
    </location>
    <ligand>
        <name>5-phospho-alpha-D-ribose 1-diphosphate</name>
        <dbReference type="ChEBI" id="CHEBI:58017"/>
        <note>ligand shared between dimeric partners</note>
    </ligand>
</feature>
<feature type="binding site" evidence="1">
    <location>
        <begin position="34"/>
        <end position="35"/>
    </location>
    <ligand>
        <name>orotate</name>
        <dbReference type="ChEBI" id="CHEBI:30839"/>
    </ligand>
</feature>
<feature type="binding site" description="in other chain" evidence="1">
    <location>
        <begin position="72"/>
        <end position="73"/>
    </location>
    <ligand>
        <name>5-phospho-alpha-D-ribose 1-diphosphate</name>
        <dbReference type="ChEBI" id="CHEBI:58017"/>
        <note>ligand shared between dimeric partners</note>
    </ligand>
</feature>
<feature type="binding site" evidence="1">
    <location>
        <position position="99"/>
    </location>
    <ligand>
        <name>5-phospho-alpha-D-ribose 1-diphosphate</name>
        <dbReference type="ChEBI" id="CHEBI:58017"/>
        <note>ligand shared between dimeric partners</note>
    </ligand>
</feature>
<feature type="binding site" description="in other chain" evidence="1">
    <location>
        <position position="100"/>
    </location>
    <ligand>
        <name>5-phospho-alpha-D-ribose 1-diphosphate</name>
        <dbReference type="ChEBI" id="CHEBI:58017"/>
        <note>ligand shared between dimeric partners</note>
    </ligand>
</feature>
<feature type="binding site" evidence="1">
    <location>
        <position position="103"/>
    </location>
    <ligand>
        <name>5-phospho-alpha-D-ribose 1-diphosphate</name>
        <dbReference type="ChEBI" id="CHEBI:58017"/>
        <note>ligand shared between dimeric partners</note>
    </ligand>
</feature>
<feature type="binding site" evidence="1">
    <location>
        <position position="105"/>
    </location>
    <ligand>
        <name>5-phospho-alpha-D-ribose 1-diphosphate</name>
        <dbReference type="ChEBI" id="CHEBI:58017"/>
        <note>ligand shared between dimeric partners</note>
    </ligand>
</feature>
<feature type="binding site" description="in other chain" evidence="1">
    <location>
        <begin position="124"/>
        <end position="132"/>
    </location>
    <ligand>
        <name>5-phospho-alpha-D-ribose 1-diphosphate</name>
        <dbReference type="ChEBI" id="CHEBI:58017"/>
        <note>ligand shared between dimeric partners</note>
    </ligand>
</feature>
<feature type="binding site" evidence="1">
    <location>
        <position position="128"/>
    </location>
    <ligand>
        <name>orotate</name>
        <dbReference type="ChEBI" id="CHEBI:30839"/>
    </ligand>
</feature>
<feature type="binding site" evidence="1">
    <location>
        <position position="156"/>
    </location>
    <ligand>
        <name>orotate</name>
        <dbReference type="ChEBI" id="CHEBI:30839"/>
    </ligand>
</feature>
<reference key="1">
    <citation type="journal article" date="2011" name="Stand. Genomic Sci.">
        <title>Complete genome sequence of 'Thioalkalivibrio sulfidophilus' HL-EbGr7.</title>
        <authorList>
            <person name="Muyzer G."/>
            <person name="Sorokin D.Y."/>
            <person name="Mavromatis K."/>
            <person name="Lapidus A."/>
            <person name="Clum A."/>
            <person name="Ivanova N."/>
            <person name="Pati A."/>
            <person name="d'Haeseleer P."/>
            <person name="Woyke T."/>
            <person name="Kyrpides N.C."/>
        </authorList>
    </citation>
    <scope>NUCLEOTIDE SEQUENCE [LARGE SCALE GENOMIC DNA]</scope>
    <source>
        <strain>HL-EbGR7</strain>
    </source>
</reference>
<gene>
    <name evidence="1" type="primary">pyrE</name>
    <name type="ordered locus">Tgr7_0108</name>
</gene>
<comment type="function">
    <text evidence="1">Catalyzes the transfer of a ribosyl phosphate group from 5-phosphoribose 1-diphosphate to orotate, leading to the formation of orotidine monophosphate (OMP).</text>
</comment>
<comment type="catalytic activity">
    <reaction evidence="1">
        <text>orotidine 5'-phosphate + diphosphate = orotate + 5-phospho-alpha-D-ribose 1-diphosphate</text>
        <dbReference type="Rhea" id="RHEA:10380"/>
        <dbReference type="ChEBI" id="CHEBI:30839"/>
        <dbReference type="ChEBI" id="CHEBI:33019"/>
        <dbReference type="ChEBI" id="CHEBI:57538"/>
        <dbReference type="ChEBI" id="CHEBI:58017"/>
        <dbReference type="EC" id="2.4.2.10"/>
    </reaction>
</comment>
<comment type="cofactor">
    <cofactor evidence="1">
        <name>Mg(2+)</name>
        <dbReference type="ChEBI" id="CHEBI:18420"/>
    </cofactor>
</comment>
<comment type="pathway">
    <text evidence="1">Pyrimidine metabolism; UMP biosynthesis via de novo pathway; UMP from orotate: step 1/2.</text>
</comment>
<comment type="subunit">
    <text evidence="1">Homodimer.</text>
</comment>
<comment type="similarity">
    <text evidence="1">Belongs to the purine/pyrimidine phosphoribosyltransferase family. PyrE subfamily.</text>
</comment>
<sequence>MKTYQSEFLAFCLERGVLRFGEFTLKSGRISPYFFNAGLFNTGSDLARLGRFYAQAISESGAAFDMLFGPAYKGIPLAAATAIALAEHHGRDLPWCFNRKEAKDHGEGGSLVGAPLTGRVLIVDDVITAGTAIRESVDIIRAAGAEPVGVAIALNRQERGKGEHSAIQEVEAEYGLKVINIASLGDLIEFMREQGGLDEHLKAVEAYRAQYGV</sequence>
<proteinExistence type="inferred from homology"/>
<organism>
    <name type="scientific">Thioalkalivibrio sulfidiphilus (strain HL-EbGR7)</name>
    <dbReference type="NCBI Taxonomy" id="396588"/>
    <lineage>
        <taxon>Bacteria</taxon>
        <taxon>Pseudomonadati</taxon>
        <taxon>Pseudomonadota</taxon>
        <taxon>Gammaproteobacteria</taxon>
        <taxon>Chromatiales</taxon>
        <taxon>Ectothiorhodospiraceae</taxon>
        <taxon>Thioalkalivibrio</taxon>
    </lineage>
</organism>
<dbReference type="EC" id="2.4.2.10" evidence="1"/>
<dbReference type="EMBL" id="CP001339">
    <property type="protein sequence ID" value="ACL71211.1"/>
    <property type="molecule type" value="Genomic_DNA"/>
</dbReference>
<dbReference type="RefSeq" id="WP_012636700.1">
    <property type="nucleotide sequence ID" value="NC_011901.1"/>
</dbReference>
<dbReference type="SMR" id="B8GTF1"/>
<dbReference type="STRING" id="396588.Tgr7_0108"/>
<dbReference type="KEGG" id="tgr:Tgr7_0108"/>
<dbReference type="eggNOG" id="COG0461">
    <property type="taxonomic scope" value="Bacteria"/>
</dbReference>
<dbReference type="HOGENOM" id="CLU_074878_0_1_6"/>
<dbReference type="OrthoDB" id="9779060at2"/>
<dbReference type="UniPathway" id="UPA00070">
    <property type="reaction ID" value="UER00119"/>
</dbReference>
<dbReference type="Proteomes" id="UP000002383">
    <property type="component" value="Chromosome"/>
</dbReference>
<dbReference type="GO" id="GO:0005737">
    <property type="term" value="C:cytoplasm"/>
    <property type="evidence" value="ECO:0007669"/>
    <property type="project" value="TreeGrafter"/>
</dbReference>
<dbReference type="GO" id="GO:0000287">
    <property type="term" value="F:magnesium ion binding"/>
    <property type="evidence" value="ECO:0007669"/>
    <property type="project" value="UniProtKB-UniRule"/>
</dbReference>
<dbReference type="GO" id="GO:0004588">
    <property type="term" value="F:orotate phosphoribosyltransferase activity"/>
    <property type="evidence" value="ECO:0007669"/>
    <property type="project" value="UniProtKB-UniRule"/>
</dbReference>
<dbReference type="GO" id="GO:0006207">
    <property type="term" value="P:'de novo' pyrimidine nucleobase biosynthetic process"/>
    <property type="evidence" value="ECO:0007669"/>
    <property type="project" value="TreeGrafter"/>
</dbReference>
<dbReference type="GO" id="GO:0044205">
    <property type="term" value="P:'de novo' UMP biosynthetic process"/>
    <property type="evidence" value="ECO:0007669"/>
    <property type="project" value="UniProtKB-UniRule"/>
</dbReference>
<dbReference type="GO" id="GO:0046132">
    <property type="term" value="P:pyrimidine ribonucleoside biosynthetic process"/>
    <property type="evidence" value="ECO:0007669"/>
    <property type="project" value="TreeGrafter"/>
</dbReference>
<dbReference type="CDD" id="cd06223">
    <property type="entry name" value="PRTases_typeI"/>
    <property type="match status" value="1"/>
</dbReference>
<dbReference type="FunFam" id="3.40.50.2020:FF:000008">
    <property type="entry name" value="Orotate phosphoribosyltransferase"/>
    <property type="match status" value="1"/>
</dbReference>
<dbReference type="Gene3D" id="3.40.50.2020">
    <property type="match status" value="1"/>
</dbReference>
<dbReference type="HAMAP" id="MF_01208">
    <property type="entry name" value="PyrE"/>
    <property type="match status" value="1"/>
</dbReference>
<dbReference type="InterPro" id="IPR023031">
    <property type="entry name" value="OPRT"/>
</dbReference>
<dbReference type="InterPro" id="IPR004467">
    <property type="entry name" value="Or_phspho_trans_dom"/>
</dbReference>
<dbReference type="InterPro" id="IPR000836">
    <property type="entry name" value="PRibTrfase_dom"/>
</dbReference>
<dbReference type="InterPro" id="IPR029057">
    <property type="entry name" value="PRTase-like"/>
</dbReference>
<dbReference type="NCBIfam" id="TIGR00336">
    <property type="entry name" value="pyrE"/>
    <property type="match status" value="1"/>
</dbReference>
<dbReference type="PANTHER" id="PTHR46683">
    <property type="entry name" value="OROTATE PHOSPHORIBOSYLTRANSFERASE 1-RELATED"/>
    <property type="match status" value="1"/>
</dbReference>
<dbReference type="PANTHER" id="PTHR46683:SF1">
    <property type="entry name" value="OROTATE PHOSPHORIBOSYLTRANSFERASE 1-RELATED"/>
    <property type="match status" value="1"/>
</dbReference>
<dbReference type="Pfam" id="PF00156">
    <property type="entry name" value="Pribosyltran"/>
    <property type="match status" value="1"/>
</dbReference>
<dbReference type="SUPFAM" id="SSF53271">
    <property type="entry name" value="PRTase-like"/>
    <property type="match status" value="1"/>
</dbReference>
<dbReference type="PROSITE" id="PS00103">
    <property type="entry name" value="PUR_PYR_PR_TRANSFER"/>
    <property type="match status" value="1"/>
</dbReference>
<evidence type="ECO:0000255" key="1">
    <source>
        <dbReference type="HAMAP-Rule" id="MF_01208"/>
    </source>
</evidence>